<geneLocation type="chloroplast"/>
<proteinExistence type="inferred from homology"/>
<gene>
    <name evidence="2" type="primary">petA</name>
</gene>
<dbReference type="EMBL" id="AF494278">
    <property type="protein sequence ID" value="AAM96526.1"/>
    <property type="molecule type" value="Genomic_DNA"/>
</dbReference>
<dbReference type="RefSeq" id="NP_683816.1">
    <property type="nucleotide sequence ID" value="NC_004115.1"/>
</dbReference>
<dbReference type="SMR" id="Q8M9X2"/>
<dbReference type="GeneID" id="860808"/>
<dbReference type="GO" id="GO:0009535">
    <property type="term" value="C:chloroplast thylakoid membrane"/>
    <property type="evidence" value="ECO:0007669"/>
    <property type="project" value="UniProtKB-SubCell"/>
</dbReference>
<dbReference type="GO" id="GO:0009055">
    <property type="term" value="F:electron transfer activity"/>
    <property type="evidence" value="ECO:0007669"/>
    <property type="project" value="UniProtKB-UniRule"/>
</dbReference>
<dbReference type="GO" id="GO:0020037">
    <property type="term" value="F:heme binding"/>
    <property type="evidence" value="ECO:0007669"/>
    <property type="project" value="InterPro"/>
</dbReference>
<dbReference type="GO" id="GO:0005506">
    <property type="term" value="F:iron ion binding"/>
    <property type="evidence" value="ECO:0007669"/>
    <property type="project" value="InterPro"/>
</dbReference>
<dbReference type="GO" id="GO:0015979">
    <property type="term" value="P:photosynthesis"/>
    <property type="evidence" value="ECO:0007669"/>
    <property type="project" value="UniProtKB-UniRule"/>
</dbReference>
<dbReference type="FunFam" id="1.20.5.700:FF:000001">
    <property type="entry name" value="Cytochrome f"/>
    <property type="match status" value="1"/>
</dbReference>
<dbReference type="FunFam" id="2.60.40.830:FF:000001">
    <property type="entry name" value="Cytochrome f"/>
    <property type="match status" value="1"/>
</dbReference>
<dbReference type="Gene3D" id="2.40.50.100">
    <property type="match status" value="1"/>
</dbReference>
<dbReference type="Gene3D" id="2.60.40.830">
    <property type="entry name" value="Cytochrome f large domain"/>
    <property type="match status" value="1"/>
</dbReference>
<dbReference type="Gene3D" id="1.20.5.700">
    <property type="entry name" value="Single helix bin"/>
    <property type="match status" value="1"/>
</dbReference>
<dbReference type="HAMAP" id="MF_00610">
    <property type="entry name" value="Cytb6_f_cytF"/>
    <property type="match status" value="1"/>
</dbReference>
<dbReference type="InterPro" id="IPR024058">
    <property type="entry name" value="Cyt-f_TM"/>
</dbReference>
<dbReference type="InterPro" id="IPR002325">
    <property type="entry name" value="Cyt_f"/>
</dbReference>
<dbReference type="InterPro" id="IPR024094">
    <property type="entry name" value="Cyt_f_lg_dom"/>
</dbReference>
<dbReference type="InterPro" id="IPR036826">
    <property type="entry name" value="Cyt_f_lg_dom_sf"/>
</dbReference>
<dbReference type="InterPro" id="IPR011054">
    <property type="entry name" value="Rudment_hybrid_motif"/>
</dbReference>
<dbReference type="PANTHER" id="PTHR33288">
    <property type="match status" value="1"/>
</dbReference>
<dbReference type="PANTHER" id="PTHR33288:SF10">
    <property type="entry name" value="CYTOCHROME F"/>
    <property type="match status" value="1"/>
</dbReference>
<dbReference type="Pfam" id="PF01333">
    <property type="entry name" value="Apocytochr_F_C"/>
    <property type="match status" value="1"/>
</dbReference>
<dbReference type="Pfam" id="PF16639">
    <property type="entry name" value="Apocytochr_F_N"/>
    <property type="match status" value="1"/>
</dbReference>
<dbReference type="PRINTS" id="PR00610">
    <property type="entry name" value="CYTOCHROMEF"/>
</dbReference>
<dbReference type="SUPFAM" id="SSF103431">
    <property type="entry name" value="Cytochrome f subunit of the cytochrome b6f complex, transmembrane anchor"/>
    <property type="match status" value="1"/>
</dbReference>
<dbReference type="SUPFAM" id="SSF49441">
    <property type="entry name" value="Cytochrome f, large domain"/>
    <property type="match status" value="1"/>
</dbReference>
<dbReference type="SUPFAM" id="SSF51246">
    <property type="entry name" value="Rudiment single hybrid motif"/>
    <property type="match status" value="1"/>
</dbReference>
<dbReference type="PROSITE" id="PS51010">
    <property type="entry name" value="CYTF"/>
    <property type="match status" value="1"/>
</dbReference>
<sequence length="318" mass="35084">MQNRNFFEYPKNWIILLIPIFTTFNLLFTSDCYAFPIYAQQNYENPREATGRIVCANCHLAKGPVDIEVPKTVFPDTVFEAVVKIPYDTQIKQVLANGKKGGLNVGAVLILPEGFQLAPSDRIPAEIKEKIGNLAFQPYSEDKKNLLVIGPIPGKTYQEIIFPILSPDPNVNKESNFLKYPIYVGGNRGRGQVYPDGSKSNNNVFNSPATGKITKIVDNKKAGFELSITTVDGSSIVEIIPPGATFLVSEGDSVKIDQPLTTNPNVGGFGQADGEIVLQDPARLQGLLVFLFLVVLAQVFLVLKKKQYEKVQLAEMNF</sequence>
<organism>
    <name type="scientific">Chaetosphaeridium globosum</name>
    <name type="common">Charophycean green alga</name>
    <name type="synonym">Herposteiron globosum</name>
    <dbReference type="NCBI Taxonomy" id="96477"/>
    <lineage>
        <taxon>Eukaryota</taxon>
        <taxon>Viridiplantae</taxon>
        <taxon>Streptophyta</taxon>
        <taxon>Coleochaetophyceae</taxon>
        <taxon>Coleochaetales</taxon>
        <taxon>Chaetosphaeridiaceae</taxon>
        <taxon>Chaetosphaeridium</taxon>
    </lineage>
</organism>
<accession>Q8M9X2</accession>
<reference key="1">
    <citation type="journal article" date="2002" name="Proc. Natl. Acad. Sci. U.S.A.">
        <title>The chloroplast and mitochondrial genome sequences of the charophyte Chaetosphaeridium globosum: insights into the timing of the events that restructured organelle DNAs within the green algal lineage that led to land plants.</title>
        <authorList>
            <person name="Turmel M."/>
            <person name="Otis C."/>
            <person name="Lemieux C."/>
        </authorList>
    </citation>
    <scope>NUCLEOTIDE SEQUENCE [LARGE SCALE GENOMIC DNA]</scope>
    <source>
        <strain>M1311</strain>
    </source>
</reference>
<feature type="signal peptide" evidence="2">
    <location>
        <begin position="1"/>
        <end position="34"/>
    </location>
</feature>
<feature type="chain" id="PRO_0000023808" description="Cytochrome f">
    <location>
        <begin position="35"/>
        <end position="318"/>
    </location>
</feature>
<feature type="transmembrane region" description="Helical" evidence="2">
    <location>
        <begin position="284"/>
        <end position="303"/>
    </location>
</feature>
<feature type="binding site" description="axial binding residue" evidence="2">
    <location>
        <position position="35"/>
    </location>
    <ligand>
        <name>heme</name>
        <dbReference type="ChEBI" id="CHEBI:30413"/>
    </ligand>
    <ligandPart>
        <name>Fe</name>
        <dbReference type="ChEBI" id="CHEBI:18248"/>
    </ligandPart>
</feature>
<feature type="binding site" description="covalent" evidence="2">
    <location>
        <position position="55"/>
    </location>
    <ligand>
        <name>heme</name>
        <dbReference type="ChEBI" id="CHEBI:30413"/>
    </ligand>
</feature>
<feature type="binding site" description="covalent" evidence="2">
    <location>
        <position position="58"/>
    </location>
    <ligand>
        <name>heme</name>
        <dbReference type="ChEBI" id="CHEBI:30413"/>
    </ligand>
</feature>
<feature type="binding site" description="axial binding residue" evidence="2">
    <location>
        <position position="59"/>
    </location>
    <ligand>
        <name>heme</name>
        <dbReference type="ChEBI" id="CHEBI:30413"/>
    </ligand>
    <ligandPart>
        <name>Fe</name>
        <dbReference type="ChEBI" id="CHEBI:18248"/>
    </ligandPart>
</feature>
<name>CYF_CHAGL</name>
<comment type="function">
    <text evidence="2">Component of the cytochrome b6-f complex, which mediates electron transfer between photosystem II (PSII) and photosystem I (PSI), cyclic electron flow around PSI, and state transitions.</text>
</comment>
<comment type="cofactor">
    <cofactor evidence="2">
        <name>heme</name>
        <dbReference type="ChEBI" id="CHEBI:30413"/>
    </cofactor>
    <text evidence="2">Binds 1 heme group covalently.</text>
</comment>
<comment type="subunit">
    <text evidence="1">The 4 large subunits of the cytochrome b6-f complex are cytochrome b6, subunit IV (17 kDa polypeptide, petD), cytochrome f and the Rieske protein, while the 4 small subunits are PetG, PetL, PetM and PetN. The complex functions as a dimer (By similarity).</text>
</comment>
<comment type="subcellular location">
    <subcellularLocation>
        <location evidence="2">Plastid</location>
        <location evidence="2">Chloroplast thylakoid membrane</location>
        <topology evidence="2">Single-pass membrane protein</topology>
    </subcellularLocation>
</comment>
<comment type="similarity">
    <text evidence="2">Belongs to the cytochrome f family.</text>
</comment>
<protein>
    <recommendedName>
        <fullName evidence="2">Cytochrome f</fullName>
    </recommendedName>
</protein>
<keyword id="KW-0150">Chloroplast</keyword>
<keyword id="KW-0249">Electron transport</keyword>
<keyword id="KW-0349">Heme</keyword>
<keyword id="KW-0408">Iron</keyword>
<keyword id="KW-0472">Membrane</keyword>
<keyword id="KW-0479">Metal-binding</keyword>
<keyword id="KW-0602">Photosynthesis</keyword>
<keyword id="KW-0934">Plastid</keyword>
<keyword id="KW-0732">Signal</keyword>
<keyword id="KW-0793">Thylakoid</keyword>
<keyword id="KW-0812">Transmembrane</keyword>
<keyword id="KW-1133">Transmembrane helix</keyword>
<keyword id="KW-0813">Transport</keyword>
<evidence type="ECO:0000250" key="1"/>
<evidence type="ECO:0000255" key="2">
    <source>
        <dbReference type="HAMAP-Rule" id="MF_00610"/>
    </source>
</evidence>